<feature type="chain" id="PRO_0000041021" description="Outer capsid protein VP4" evidence="1">
    <location>
        <begin position="1"/>
        <end position="772"/>
    </location>
</feature>
<feature type="chain" id="PRO_0000041022" description="Outer capsid protein VP8*" evidence="1">
    <location>
        <begin position="1"/>
        <end position="232"/>
    </location>
</feature>
<feature type="chain" id="PRO_0000041023" description="Outer capsid protein VP5*" evidence="1">
    <location>
        <begin position="246"/>
        <end position="772"/>
    </location>
</feature>
<feature type="region of interest" description="Spike head" evidence="1">
    <location>
        <begin position="65"/>
        <end position="225"/>
    </location>
</feature>
<feature type="region of interest" description="Spike body and stalk (antigen domain)" evidence="1">
    <location>
        <begin position="247"/>
        <end position="478"/>
    </location>
</feature>
<feature type="region of interest" description="Hydrophobic; possible role in virus entry into host cell" evidence="1">
    <location>
        <begin position="388"/>
        <end position="408"/>
    </location>
</feature>
<feature type="region of interest" description="Spike foot" evidence="1">
    <location>
        <begin position="509"/>
        <end position="772"/>
    </location>
</feature>
<feature type="coiled-coil region" evidence="1">
    <location>
        <begin position="483"/>
        <end position="510"/>
    </location>
</feature>
<feature type="short sequence motif" description="YGL motif; interaction with ITGA4" evidence="1">
    <location>
        <begin position="447"/>
        <end position="449"/>
    </location>
</feature>
<feature type="site" description="Cleavage" evidence="1">
    <location>
        <begin position="232"/>
        <end position="233"/>
    </location>
</feature>
<feature type="site" description="Cleavage" evidence="1">
    <location>
        <begin position="242"/>
        <end position="243"/>
    </location>
</feature>
<feature type="site" description="Probable cleavage" evidence="1">
    <location>
        <begin position="245"/>
        <end position="246"/>
    </location>
</feature>
<feature type="sequence conflict" description="In Ref. 2." evidence="3" ref="2">
    <original>R</original>
    <variation>A</variation>
    <location>
        <position position="2"/>
    </location>
</feature>
<feature type="sequence conflict" description="In Ref. 2." evidence="3" ref="2">
    <original>N</original>
    <variation>H</variation>
    <location>
        <position position="193"/>
    </location>
</feature>
<feature type="sequence conflict" description="In Ref. 2." evidence="3" ref="2">
    <original>S</original>
    <variation>T</variation>
    <location>
        <position position="535"/>
    </location>
</feature>
<evidence type="ECO:0000255" key="1">
    <source>
        <dbReference type="HAMAP-Rule" id="MF_04132"/>
    </source>
</evidence>
<evidence type="ECO:0000269" key="2">
    <source>
    </source>
</evidence>
<evidence type="ECO:0000305" key="3"/>
<dbReference type="EMBL" id="M92986">
    <property type="protein sequence ID" value="AAA02978.1"/>
    <property type="molecule type" value="mRNA"/>
</dbReference>
<dbReference type="EMBL" id="D13394">
    <property type="status" value="NOT_ANNOTATED_CDS"/>
    <property type="molecule type" value="Genomic_RNA"/>
</dbReference>
<dbReference type="PIR" id="A44052">
    <property type="entry name" value="A44052"/>
</dbReference>
<dbReference type="PIR" id="JQ2025">
    <property type="entry name" value="JQ2025"/>
</dbReference>
<dbReference type="PDB" id="4YG3">
    <property type="method" value="X-ray"/>
    <property type="resolution" value="2.29 A"/>
    <property type="chains" value="A=65-225"/>
</dbReference>
<dbReference type="PDB" id="4YG6">
    <property type="method" value="X-ray"/>
    <property type="resolution" value="1.46 A"/>
    <property type="chains" value="A/B/C/D=65-225"/>
</dbReference>
<dbReference type="PDBsum" id="4YG3"/>
<dbReference type="PDBsum" id="4YG6"/>
<dbReference type="SMR" id="P35746"/>
<dbReference type="UniLectin" id="P35746"/>
<dbReference type="GO" id="GO:0044172">
    <property type="term" value="C:host cell endoplasmic reticulum-Golgi intermediate compartment"/>
    <property type="evidence" value="ECO:0007669"/>
    <property type="project" value="UniProtKB-SubCell"/>
</dbReference>
<dbReference type="GO" id="GO:0020002">
    <property type="term" value="C:host cell plasma membrane"/>
    <property type="evidence" value="ECO:0007669"/>
    <property type="project" value="UniProtKB-SubCell"/>
</dbReference>
<dbReference type="GO" id="GO:0044168">
    <property type="term" value="C:host cell rough endoplasmic reticulum"/>
    <property type="evidence" value="ECO:0007669"/>
    <property type="project" value="UniProtKB-SubCell"/>
</dbReference>
<dbReference type="GO" id="GO:0044163">
    <property type="term" value="C:host cytoskeleton"/>
    <property type="evidence" value="ECO:0007669"/>
    <property type="project" value="UniProtKB-SubCell"/>
</dbReference>
<dbReference type="GO" id="GO:0016020">
    <property type="term" value="C:membrane"/>
    <property type="evidence" value="ECO:0007669"/>
    <property type="project" value="UniProtKB-KW"/>
</dbReference>
<dbReference type="GO" id="GO:0039624">
    <property type="term" value="C:viral outer capsid"/>
    <property type="evidence" value="ECO:0007669"/>
    <property type="project" value="UniProtKB-UniRule"/>
</dbReference>
<dbReference type="GO" id="GO:0039665">
    <property type="term" value="P:permeabilization of host organelle membrane involved in viral entry into host cell"/>
    <property type="evidence" value="ECO:0007669"/>
    <property type="project" value="UniProtKB-UniRule"/>
</dbReference>
<dbReference type="GO" id="GO:0019062">
    <property type="term" value="P:virion attachment to host cell"/>
    <property type="evidence" value="ECO:0007669"/>
    <property type="project" value="UniProtKB-UniRule"/>
</dbReference>
<dbReference type="Gene3D" id="1.20.5.170">
    <property type="match status" value="1"/>
</dbReference>
<dbReference type="Gene3D" id="2.60.120.200">
    <property type="match status" value="1"/>
</dbReference>
<dbReference type="HAMAP" id="MF_04132">
    <property type="entry name" value="Rota_A_VP4"/>
    <property type="match status" value="1"/>
</dbReference>
<dbReference type="HAMAP" id="MF_04125">
    <property type="entry name" value="Rota_VP4"/>
    <property type="match status" value="1"/>
</dbReference>
<dbReference type="InterPro" id="IPR013320">
    <property type="entry name" value="ConA-like_dom_sf"/>
</dbReference>
<dbReference type="InterPro" id="IPR042546">
    <property type="entry name" value="Rota_A_VP4"/>
</dbReference>
<dbReference type="InterPro" id="IPR035330">
    <property type="entry name" value="Rota_VP4_MID"/>
</dbReference>
<dbReference type="InterPro" id="IPR038017">
    <property type="entry name" value="Rota_VP4_MID_sf"/>
</dbReference>
<dbReference type="InterPro" id="IPR000416">
    <property type="entry name" value="VP4_concanavalin-like"/>
</dbReference>
<dbReference type="InterPro" id="IPR035329">
    <property type="entry name" value="VP4_helical"/>
</dbReference>
<dbReference type="Pfam" id="PF17477">
    <property type="entry name" value="Rota_VP4_MID"/>
    <property type="match status" value="1"/>
</dbReference>
<dbReference type="Pfam" id="PF00426">
    <property type="entry name" value="VP4_haemagglut"/>
    <property type="match status" value="1"/>
</dbReference>
<dbReference type="Pfam" id="PF17478">
    <property type="entry name" value="VP4_helical"/>
    <property type="match status" value="1"/>
</dbReference>
<dbReference type="SUPFAM" id="SSF49899">
    <property type="entry name" value="Concanavalin A-like lectins/glucanases"/>
    <property type="match status" value="1"/>
</dbReference>
<dbReference type="SUPFAM" id="SSF111379">
    <property type="entry name" value="VP4 membrane interaction domain"/>
    <property type="match status" value="1"/>
</dbReference>
<sequence>MRSLIYRQLLYNSYSVDLSDEITNIGAEKKENVTVQLGEFAQSQYAPVSWGSGETLSGNVEEQTLDGPYAPDSSNLPSNCWYLVNPSNDGVVFSVTDNSTFWMFTYLVLPNTAQTNVTVNVMNETVNISIDNSGSTYRFVDYIKTSSTQAYGSRNYLNTAHRLQAYRRDGDGNISNYWGADTQGDLRVGTYSNPVPNAVINLNADFYVIPDSQQETCTEYIRGGLPAMQTTTYVTPISYAIRSQRIARPNEDIIISKASLWKEVQYNRDIVIRFVFANNIIKAGGLGYKWSEISYKANNYQYTYMRDGVEVVAHTTVSVNGVSVYNYNTGPLPTDFMIRNYDVLKESSFVYVDYWDDSQAFRNMVYVRSLNAELNQVRCEGGHYSFALPVGSWPVMQGGSVILTFDGVTLSTQFTDYVSLNSLRFRFRCAVSEPSFRVTGTRISNLYGLPAANPMGDQQYYEAAGRFSLILLVPSNDDYQTPIANSVTVRQDLERQLDEMRREFNELSANIALSQLIDLALLPLDMFSMFSGIQSTVEAAKTFATSVMKKFRKSDLAKSVNSLTDAITDAAGSISRSSTLRSVNSAASVWTDISDIVDSTDNVVAATATAAAKKFRVKEFTTEFNGVSFDDISAAVVKTKMSKLNVVDEEILPQIITEASEKFIPNRAYRLIDGEKVYEVTTEGKYFAYLTETFEEVVFDAERFAELVTDSPVISAIIDFKTIKNLNDNYGITREQALNMLRSDPKVLRSFINQNNPIIKNRIEQLILQCRI</sequence>
<keyword id="KW-0002">3D-structure</keyword>
<keyword id="KW-0167">Capsid protein</keyword>
<keyword id="KW-0175">Coiled coil</keyword>
<keyword id="KW-0348">Hemagglutinin</keyword>
<keyword id="KW-1032">Host cell membrane</keyword>
<keyword id="KW-1035">Host cytoplasm</keyword>
<keyword id="KW-1037">Host cytoskeleton</keyword>
<keyword id="KW-1038">Host endoplasmic reticulum</keyword>
<keyword id="KW-1043">Host membrane</keyword>
<keyword id="KW-0945">Host-virus interaction</keyword>
<keyword id="KW-0472">Membrane</keyword>
<keyword id="KW-1152">Outer capsid protein</keyword>
<keyword id="KW-1161">Viral attachment to host cell</keyword>
<keyword id="KW-1162">Viral penetration into host cytoplasm</keyword>
<keyword id="KW-1173">Viral penetration via permeabilization of host membrane</keyword>
<keyword id="KW-0946">Virion</keyword>
<keyword id="KW-1160">Virus entry into host cell</keyword>
<organism>
    <name type="scientific">Rotavirus A (isolate RVA/Cow/United States/B223/1983/G10P8[11])</name>
    <name type="common">RV-A</name>
    <dbReference type="NCBI Taxonomy" id="1835656"/>
    <lineage>
        <taxon>Viruses</taxon>
        <taxon>Riboviria</taxon>
        <taxon>Orthornavirae</taxon>
        <taxon>Duplornaviricota</taxon>
        <taxon>Resentoviricetes</taxon>
        <taxon>Reovirales</taxon>
        <taxon>Sedoreoviridae</taxon>
        <taxon>Rotavirus</taxon>
        <taxon>Rotavirus A</taxon>
    </lineage>
</organism>
<accession>P35746</accession>
<protein>
    <recommendedName>
        <fullName evidence="1">Outer capsid protein VP4</fullName>
    </recommendedName>
    <alternativeName>
        <fullName evidence="1">Hemagglutinin</fullName>
    </alternativeName>
    <component>
        <recommendedName>
            <fullName evidence="1">Outer capsid protein VP8*</fullName>
        </recommendedName>
    </component>
    <component>
        <recommendedName>
            <fullName evidence="1">Outer capsid protein VP5*</fullName>
        </recommendedName>
    </component>
</protein>
<comment type="function">
    <molecule>Outer capsid protein VP4</molecule>
    <text evidence="1">Spike-forming protein that mediates virion attachment to the host epithelial cell receptors and plays a major role in cell penetration, determination of host range restriction and virulence. Rotavirus attachment and entry into the host cell probably involves multiple sequential contacts between the outer capsid proteins VP4 and VP7, and the cell receptors. It is subsequently lost, together with VP7, following virus entry into the host cell. Following entry into the host cell, low intracellular or intravesicular Ca(2+) concentration probably causes the calcium-stabilized VP7 trimers to dissociate from the virion. This step is probably necessary for the membrane-disrupting entry step and the release of VP4, which is locked onto the virion by VP7. During the virus exit from the host cell, VP4 seems to be required to target the newly formed virions to the host cell lipid rafts.</text>
</comment>
<comment type="function">
    <molecule>Outer capsid protein VP5*</molecule>
    <text evidence="1">Forms the spike 'foot' and 'body' and acts as a membrane permeabilization protein that mediates release of viral particles from endosomal compartments into the cytoplasm. During entry, the part of VP5* that protrudes from the virus folds back on itself and reorganizes from a local dimer to a trimer. This reorganization may be linked to membrane penetration by exposing VP5* hydrophobic region. In integrin-dependent strains, VP5* targets the integrin heterodimer ITGA2/ITGB1 for cell attachment.</text>
</comment>
<comment type="function">
    <molecule>Outer capsid protein VP8*</molecule>
    <text evidence="1">Forms the head of the spikes and mediates the recognition of specific host cell surface glycans. It is the viral hemagglutinin and an important target of neutralizing antibodies. In sialic acid-dependent strains, VP8* binds to host cell sialic acid, most probably a ganglioside, providing the initial contact. In some other strains, VP8* mediates the attachment to histo-blood group antigens (HBGAs) for viral entry.</text>
</comment>
<comment type="subunit">
    <molecule>Outer capsid protein VP4</molecule>
    <text evidence="1">Homotrimer. VP4 adopts a dimeric appearance above the capsid surface, while forming a trimeric base anchored inside the capsid layer. Only hints of the third molecule are observed above the capsid surface. It probably performs a series of molecular rearrangements during viral entry. Prior to trypsin cleavage, it is flexible. The priming trypsin cleavage triggers its rearrangement into rigid spikes with approximate two-fold symmetry of their protruding parts. After an unknown second triggering event, cleaved VP4 may undergo another rearrangement, in which two VP5* subunits fold back on themselves and join a third subunit to form a tightly associated trimer, shaped like a folded umbrella. Interacts with VP6. Interacts with VP7.</text>
</comment>
<comment type="subunit">
    <molecule>Outer capsid protein VP5*</molecule>
    <text evidence="1">Homotrimer. The trimer is coiled-coil stabilized by its C-terminus, however, its N-terminus, known as antigen domain or 'body', seems to be flexible allowing it to self-associate either as a dimer or a trimer.</text>
</comment>
<comment type="subcellular location">
    <molecule>Outer capsid protein VP4</molecule>
    <subcellularLocation>
        <location evidence="1">Virion</location>
    </subcellularLocation>
    <subcellularLocation>
        <location evidence="1">Host rough endoplasmic reticulum</location>
    </subcellularLocation>
    <subcellularLocation>
        <location evidence="1">Host cell membrane</location>
    </subcellularLocation>
    <subcellularLocation>
        <location evidence="1">Host cytoplasm</location>
        <location evidence="1">Host cytoskeleton</location>
    </subcellularLocation>
    <subcellularLocation>
        <location evidence="1">Host endoplasmic reticulum-Golgi intermediate compartment</location>
    </subcellularLocation>
    <text evidence="1">The outer layer contains 180 copies of VP4, grouped as 60 dimers. Immature double-layered particles assembled in the cytoplasm bud across the membrane of the endoplasmic reticulum, acquiring during this process a transient lipid membrane that is modified with the ER resident viral glycoproteins NSP4 and VP7; these enveloped particles also contain VP4. As the particles move towards the interior of the ER cisternae, the transient lipid membrane and the non-structural protein NSP4 are lost, while the virus surface proteins VP4 and VP7 rearrange to form the outermost virus protein layer, yielding mature infectious triple-layered particles. VP4 also seems to associate with lipid rafts of the host cell membrane probably for the exit of the virus from the infected cell by an alternate pathway.</text>
</comment>
<comment type="subcellular location">
    <molecule>Outer capsid protein VP8*</molecule>
    <subcellularLocation>
        <location evidence="1">Virion</location>
    </subcellularLocation>
    <text evidence="1">Outer capsid protein.</text>
</comment>
<comment type="subcellular location">
    <molecule>Outer capsid protein VP5*</molecule>
    <subcellularLocation>
        <location evidence="1">Virion</location>
    </subcellularLocation>
    <text evidence="1">Outer capsid protein.</text>
</comment>
<comment type="domain">
    <molecule>Outer capsid protein VP4</molecule>
    <text evidence="1">The VP4 spike is divided into a foot, a stalk and body, and a head.</text>
</comment>
<comment type="PTM">
    <molecule>Outer capsid protein VP4</molecule>
    <text evidence="1">Proteolytic cleavage by trypsin results in activation of VP4 functions and greatly increases infectivity. The penetration into the host cell is dependent on trypsin treatment of VP4. It produces two peptides, VP5* and VP8* that remain associated with the virion. Cleavage of VP4 by trypsin probably occurs in vivo in the lumen of the intestine prior to infection of enterocytes. Trypsin seems to be incorporated into the three-layered viral particles but remains inactive as long as the viral outer capsid is intact and would only be activated upon the solubilization of the latter.</text>
</comment>
<comment type="miscellaneous">
    <text evidence="2">This strain probably does not use sialic acid to attach to the host cell.</text>
</comment>
<comment type="miscellaneous">
    <text evidence="1">In group A rotaviruses, VP4 defines the P serotype.</text>
</comment>
<comment type="miscellaneous">
    <text evidence="1">Some rotavirus strains are neuraminidase-sensitive and require sialic acid to attach to the cell surface. Some rotavirus strains are integrin-dependent. Some rotavirus strains depend on ganglioside for their entry into the host cell. Hsp70 also seems to be involved in the entry of some strains.</text>
</comment>
<comment type="similarity">
    <text evidence="1">Belongs to the rotavirus VP4 family.</text>
</comment>
<proteinExistence type="evidence at protein level"/>
<organismHost>
    <name type="scientific">Bos taurus</name>
    <name type="common">Bovine</name>
    <dbReference type="NCBI Taxonomy" id="9913"/>
</organismHost>
<name>VP4_ROTBB</name>
<reference key="1">
    <citation type="journal article" date="1992" name="Virology">
        <title>Amino acid sequence analysis of bovine rotavirus B223 reveals a unique outer capsid protein VP4 and confirms a third bovine VP4 type.</title>
        <authorList>
            <person name="Hardy M.E."/>
            <person name="Gorziglia M."/>
            <person name="Woode G.N."/>
        </authorList>
    </citation>
    <scope>NUCLEOTIDE SEQUENCE [MRNA]</scope>
</reference>
<reference key="2">
    <citation type="journal article" date="1993" name="J. Gen. Virol.">
        <title>Independent segregation of the VP4 and the VP7 genes in bovine rotaviruses as confirmed by VP4 sequence analysis of G8 and G10 bovine rotavirus strains.</title>
        <authorList>
            <person name="Taniguchi K."/>
            <person name="Urasawa T."/>
            <person name="Urasawa S."/>
        </authorList>
    </citation>
    <scope>NUCLEOTIDE SEQUENCE [GENOMIC RNA]</scope>
</reference>
<reference key="3">
    <citation type="journal article" date="2002" name="J. Virol.">
        <title>Initial interaction of rotavirus strains with N-acetylneuraminic (sialic) acid residues on the cell surface correlates with VP4 genotype, not species of origin.</title>
        <authorList>
            <person name="Ciarlet M."/>
            <person name="Ludert J.E."/>
            <person name="Iturriza-Gomara M."/>
            <person name="Liprandi F."/>
            <person name="Gray J.J."/>
            <person name="Desselberger U."/>
            <person name="Estes M.K."/>
        </authorList>
    </citation>
    <scope>SIALIC ACID INDEPENDENCY</scope>
</reference>